<dbReference type="EC" id="2.7.1.21" evidence="1"/>
<dbReference type="EMBL" id="X55001">
    <property type="protein sequence ID" value="CAA38747.1"/>
    <property type="molecule type" value="Genomic_DNA"/>
</dbReference>
<dbReference type="SMR" id="P27363"/>
<dbReference type="GO" id="GO:0005524">
    <property type="term" value="F:ATP binding"/>
    <property type="evidence" value="ECO:0007669"/>
    <property type="project" value="UniProtKB-KW"/>
</dbReference>
<dbReference type="GO" id="GO:0004797">
    <property type="term" value="F:thymidine kinase activity"/>
    <property type="evidence" value="ECO:0007669"/>
    <property type="project" value="UniProtKB-EC"/>
</dbReference>
<dbReference type="GO" id="GO:0071897">
    <property type="term" value="P:DNA biosynthetic process"/>
    <property type="evidence" value="ECO:0007669"/>
    <property type="project" value="UniProtKB-KW"/>
</dbReference>
<dbReference type="GO" id="GO:0006230">
    <property type="term" value="P:TMP biosynthetic process"/>
    <property type="evidence" value="ECO:0007669"/>
    <property type="project" value="InterPro"/>
</dbReference>
<dbReference type="Gene3D" id="3.40.50.300">
    <property type="entry name" value="P-loop containing nucleotide triphosphate hydrolases"/>
    <property type="match status" value="1"/>
</dbReference>
<dbReference type="HAMAP" id="MF_04029">
    <property type="entry name" value="HSV_KITH"/>
    <property type="match status" value="1"/>
</dbReference>
<dbReference type="InterPro" id="IPR001889">
    <property type="entry name" value="Herpes_TK"/>
</dbReference>
<dbReference type="InterPro" id="IPR027417">
    <property type="entry name" value="P-loop_NTPase"/>
</dbReference>
<dbReference type="Pfam" id="PF00693">
    <property type="entry name" value="Herpes_TK"/>
    <property type="match status" value="1"/>
</dbReference>
<dbReference type="SUPFAM" id="SSF52540">
    <property type="entry name" value="P-loop containing nucleoside triphosphate hydrolases"/>
    <property type="match status" value="1"/>
</dbReference>
<reference key="1">
    <citation type="journal article" date="1991" name="J. Gen. Virol.">
        <title>Loss of pseudorabies virus thymidine kinase activity due to a single base mutation and amino acid substitution.</title>
        <authorList>
            <person name="Prieto J."/>
            <person name="Hernandez A.M.M."/>
            <person name="Tabares E."/>
        </authorList>
    </citation>
    <scope>NUCLEOTIDE SEQUENCE [GENOMIC DNA]</scope>
</reference>
<protein>
    <recommendedName>
        <fullName evidence="1">Thymidine kinase</fullName>
        <ecNumber evidence="1">2.7.1.21</ecNumber>
    </recommendedName>
</protein>
<keyword id="KW-0067">ATP-binding</keyword>
<keyword id="KW-0237">DNA synthesis</keyword>
<keyword id="KW-0244">Early protein</keyword>
<keyword id="KW-0418">Kinase</keyword>
<keyword id="KW-0547">Nucleotide-binding</keyword>
<keyword id="KW-0808">Transferase</keyword>
<accession>P27363</accession>
<comment type="function">
    <text evidence="1">Catalyzes the transfer of the gamma-phospho group of ATP to thymidine to generate dTMP in the salvage pathway of pyrimidine synthesis. The dTMP serves as a substrate for DNA polymerase during viral DNA replication. Allows the virus to be reactivated and to grow in non-proliferative cells lacking a high concentration of phosphorylated nucleic acid precursors.</text>
</comment>
<comment type="catalytic activity">
    <reaction evidence="1">
        <text>thymidine + ATP = dTMP + ADP + H(+)</text>
        <dbReference type="Rhea" id="RHEA:19129"/>
        <dbReference type="ChEBI" id="CHEBI:15378"/>
        <dbReference type="ChEBI" id="CHEBI:17748"/>
        <dbReference type="ChEBI" id="CHEBI:30616"/>
        <dbReference type="ChEBI" id="CHEBI:63528"/>
        <dbReference type="ChEBI" id="CHEBI:456216"/>
        <dbReference type="EC" id="2.7.1.21"/>
    </reaction>
</comment>
<comment type="subunit">
    <text evidence="1">Homodimer.</text>
</comment>
<comment type="similarity">
    <text evidence="1">Belongs to the herpesviridae thymidine kinase family.</text>
</comment>
<proteinExistence type="inferred from homology"/>
<organism>
    <name type="scientific">Suid herpesvirus 1 (strain NIA-3)</name>
    <name type="common">SuHV-1</name>
    <name type="synonym">Pseudorabies virus (strain NIA-3)</name>
    <dbReference type="NCBI Taxonomy" id="10349"/>
    <lineage>
        <taxon>Viruses</taxon>
        <taxon>Duplodnaviria</taxon>
        <taxon>Heunggongvirae</taxon>
        <taxon>Peploviricota</taxon>
        <taxon>Herviviricetes</taxon>
        <taxon>Herpesvirales</taxon>
        <taxon>Orthoherpesviridae</taxon>
        <taxon>Alphaherpesvirinae</taxon>
        <taxon>Varicellovirus</taxon>
        <taxon>Varicellovirus suidalpha1</taxon>
        <taxon>Suid herpesvirus 1</taxon>
    </lineage>
</organism>
<feature type="chain" id="PRO_0000175082" description="Thymidine kinase">
    <location>
        <begin position="1"/>
        <end position="320"/>
    </location>
</feature>
<feature type="active site" description="Proton acceptor" evidence="1">
    <location>
        <position position="33"/>
    </location>
</feature>
<feature type="binding site" evidence="1">
    <location>
        <begin position="10"/>
        <end position="17"/>
    </location>
    <ligand>
        <name>ATP</name>
        <dbReference type="ChEBI" id="CHEBI:30616"/>
    </ligand>
</feature>
<feature type="binding site" evidence="1">
    <location>
        <position position="51"/>
    </location>
    <ligand>
        <name>substrate</name>
    </ligand>
</feature>
<feature type="binding site" evidence="1">
    <location>
        <position position="75"/>
    </location>
    <ligand>
        <name>substrate</name>
    </ligand>
</feature>
<feature type="binding site" evidence="1">
    <location>
        <position position="162"/>
    </location>
    <ligand>
        <name>ATP</name>
        <dbReference type="ChEBI" id="CHEBI:30616"/>
    </ligand>
</feature>
<feature type="binding site" evidence="1">
    <location>
        <position position="168"/>
    </location>
    <ligand>
        <name>substrate</name>
    </ligand>
</feature>
<organismHost>
    <name type="scientific">Sus scrofa</name>
    <name type="common">Pig</name>
    <dbReference type="NCBI Taxonomy" id="9823"/>
</organismHost>
<name>KITH_SUHVN</name>
<evidence type="ECO:0000255" key="1">
    <source>
        <dbReference type="HAMAP-Rule" id="MF_04029"/>
    </source>
</evidence>
<sequence>MRILRIYLDGAYDTGKSTTARVMALGGALYVPEPMAYWRTLFDTDTVAGIYDAQTRKQNGSLSEEDAALVTAHDQAAFATPYLLLHTRLVPLFGPAVEGPPEMTVVFDRHPVAATVCFPLARFIVGDISAAAFVGLAATLPGEPPGGNLVVASLDPDEHLRRLRARARAGEHVDARLLTALRNVYAMLVNTSRYLSSGRRWRDDWGRAPRFDQTTRDCLALNELCRPRDDPELQDTLFGAYKAPELCDRRGRPLEVHAWAMDALVAKLLPLRVSTVDLGPSPRVCAAAVAAQTRGMEVTESAYGDHIRQCVCAFTSEMGV</sequence>
<gene>
    <name evidence="1" type="primary">TK</name>
</gene>